<keyword id="KW-0496">Mitochondrion</keyword>
<keyword id="KW-1185">Reference proteome</keyword>
<keyword id="KW-0809">Transit peptide</keyword>
<reference key="1">
    <citation type="journal article" date="2004" name="Nature">
        <title>Genome evolution in yeasts.</title>
        <authorList>
            <person name="Dujon B."/>
            <person name="Sherman D."/>
            <person name="Fischer G."/>
            <person name="Durrens P."/>
            <person name="Casaregola S."/>
            <person name="Lafontaine I."/>
            <person name="de Montigny J."/>
            <person name="Marck C."/>
            <person name="Neuveglise C."/>
            <person name="Talla E."/>
            <person name="Goffard N."/>
            <person name="Frangeul L."/>
            <person name="Aigle M."/>
            <person name="Anthouard V."/>
            <person name="Babour A."/>
            <person name="Barbe V."/>
            <person name="Barnay S."/>
            <person name="Blanchin S."/>
            <person name="Beckerich J.-M."/>
            <person name="Beyne E."/>
            <person name="Bleykasten C."/>
            <person name="Boisrame A."/>
            <person name="Boyer J."/>
            <person name="Cattolico L."/>
            <person name="Confanioleri F."/>
            <person name="de Daruvar A."/>
            <person name="Despons L."/>
            <person name="Fabre E."/>
            <person name="Fairhead C."/>
            <person name="Ferry-Dumazet H."/>
            <person name="Groppi A."/>
            <person name="Hantraye F."/>
            <person name="Hennequin C."/>
            <person name="Jauniaux N."/>
            <person name="Joyet P."/>
            <person name="Kachouri R."/>
            <person name="Kerrest A."/>
            <person name="Koszul R."/>
            <person name="Lemaire M."/>
            <person name="Lesur I."/>
            <person name="Ma L."/>
            <person name="Muller H."/>
            <person name="Nicaud J.-M."/>
            <person name="Nikolski M."/>
            <person name="Oztas S."/>
            <person name="Ozier-Kalogeropoulos O."/>
            <person name="Pellenz S."/>
            <person name="Potier S."/>
            <person name="Richard G.-F."/>
            <person name="Straub M.-L."/>
            <person name="Suleau A."/>
            <person name="Swennen D."/>
            <person name="Tekaia F."/>
            <person name="Wesolowski-Louvel M."/>
            <person name="Westhof E."/>
            <person name="Wirth B."/>
            <person name="Zeniou-Meyer M."/>
            <person name="Zivanovic Y."/>
            <person name="Bolotin-Fukuhara M."/>
            <person name="Thierry A."/>
            <person name="Bouchier C."/>
            <person name="Caudron B."/>
            <person name="Scarpelli C."/>
            <person name="Gaillardin C."/>
            <person name="Weissenbach J."/>
            <person name="Wincker P."/>
            <person name="Souciet J.-L."/>
        </authorList>
    </citation>
    <scope>NUCLEOTIDE SEQUENCE [LARGE SCALE GENOMIC DNA]</scope>
    <source>
        <strain>ATCC 36239 / CBS 767 / BCRC 21394 / JCM 1990 / NBRC 0083 / IGC 2968</strain>
    </source>
</reference>
<sequence>MLGRIRPFVRYSVFRAGTYRTLFTSPYRMQISLIYNLFATCNSCGIKLQNENPSKPGFYRPPSARPKLVKPEDESFNRLMDGLSVEDRKLLLNSSDATLPQPVTASTAAATTTNTKKEGDIQCIRCREAMYKSNFSWDELPVESIDKIMSTIPPDGNVVYIVNAVDFPLSLNRSIFKYRNPSQITFLVTKCDLLFPSAQLSNRYGATFFKDYLSRTHGADPEKVFVTSGMIDWNMKDIIKALPDNSYMVGGVNSGKSTVIKSLLYTMEKSKPNYLSSKQQTKLEKQQDRMINSNAVNRHQHTKSQRKVEQKFKMTYGPGTSYMPGFTRGHIVHDIDGKTIVDVPGFSANESHGIYGYLDPSTIKTLSKGVKVHKRGMYDSLYESVRNGQVLTIGGLFYLATPQNAVYQIKNCINHKFHVFNSMDKAISILQTIEKNKALENVFLVNKQSLDKLQKFIIPPFYGSIDLVIKNLGHLNITPTGKKIDNEPLVIYLPEGVEAIIRQPLTRYITRSLAGRDKNGNPLRKELWKSKSVTHLQRFNGTTPFASLLIPSTGSDNLQCISEYNSKLNDTPITYDNNTHLDESNKYKYWVNI</sequence>
<protein>
    <recommendedName>
        <fullName>Genetic interactor of prohibitins 3, mitochondrial</fullName>
    </recommendedName>
    <alternativeName>
        <fullName>Found in mitochondrial proteome protein 38</fullName>
    </alternativeName>
</protein>
<proteinExistence type="inferred from homology"/>
<feature type="transit peptide" description="Mitochondrion" evidence="2">
    <location>
        <begin position="1"/>
        <end position="61"/>
    </location>
</feature>
<feature type="chain" id="PRO_0000409634" description="Genetic interactor of prohibitins 3, mitochondrial">
    <location>
        <begin position="62"/>
        <end position="593"/>
    </location>
</feature>
<feature type="domain" description="CP-type G" evidence="3">
    <location>
        <begin position="142"/>
        <end position="349"/>
    </location>
</feature>
<accession>Q6BMA8</accession>
<gene>
    <name type="primary">GEP3</name>
    <name type="synonym">FMP48</name>
    <name type="ordered locus">DEHA2F07018g</name>
</gene>
<name>GEP3_DEBHA</name>
<dbReference type="EMBL" id="CR382138">
    <property type="protein sequence ID" value="CAG88995.2"/>
    <property type="molecule type" value="Genomic_DNA"/>
</dbReference>
<dbReference type="RefSeq" id="XP_460663.2">
    <property type="nucleotide sequence ID" value="XM_460663.1"/>
</dbReference>
<dbReference type="SMR" id="Q6BMA8"/>
<dbReference type="FunCoup" id="Q6BMA8">
    <property type="interactions" value="92"/>
</dbReference>
<dbReference type="STRING" id="284592.Q6BMA8"/>
<dbReference type="GeneID" id="2904137"/>
<dbReference type="KEGG" id="dha:DEHA2F07018g"/>
<dbReference type="VEuPathDB" id="FungiDB:DEHA2F07018g"/>
<dbReference type="eggNOG" id="ENOG502S067">
    <property type="taxonomic scope" value="Eukaryota"/>
</dbReference>
<dbReference type="HOGENOM" id="CLU_025792_0_0_1"/>
<dbReference type="InParanoid" id="Q6BMA8"/>
<dbReference type="OMA" id="IIPPFYG"/>
<dbReference type="OrthoDB" id="1696305at2759"/>
<dbReference type="Proteomes" id="UP000000599">
    <property type="component" value="Chromosome F"/>
</dbReference>
<dbReference type="GO" id="GO:0005739">
    <property type="term" value="C:mitochondrion"/>
    <property type="evidence" value="ECO:0007669"/>
    <property type="project" value="UniProtKB-SubCell"/>
</dbReference>
<dbReference type="GO" id="GO:0005525">
    <property type="term" value="F:GTP binding"/>
    <property type="evidence" value="ECO:0007669"/>
    <property type="project" value="InterPro"/>
</dbReference>
<dbReference type="Gene3D" id="3.40.50.300">
    <property type="entry name" value="P-loop containing nucleotide triphosphate hydrolases"/>
    <property type="match status" value="1"/>
</dbReference>
<dbReference type="InterPro" id="IPR030378">
    <property type="entry name" value="G_CP_dom"/>
</dbReference>
<dbReference type="InterPro" id="IPR050896">
    <property type="entry name" value="Mito_lipid_metab_GTPase"/>
</dbReference>
<dbReference type="InterPro" id="IPR027417">
    <property type="entry name" value="P-loop_NTPase"/>
</dbReference>
<dbReference type="PANTHER" id="PTHR46434">
    <property type="entry name" value="GENETIC INTERACTOR OF PROHIBITINS 3, MITOCHONDRIAL"/>
    <property type="match status" value="1"/>
</dbReference>
<dbReference type="PANTHER" id="PTHR46434:SF1">
    <property type="entry name" value="GENETIC INTERACTOR OF PROHIBITINS 3, MITOCHONDRIAL"/>
    <property type="match status" value="1"/>
</dbReference>
<dbReference type="SUPFAM" id="SSF52540">
    <property type="entry name" value="P-loop containing nucleoside triphosphate hydrolases"/>
    <property type="match status" value="1"/>
</dbReference>
<dbReference type="PROSITE" id="PS51721">
    <property type="entry name" value="G_CP"/>
    <property type="match status" value="1"/>
</dbReference>
<comment type="function">
    <text evidence="1">May be involved in the mitochondrial lipid metabolism.</text>
</comment>
<comment type="subcellular location">
    <subcellularLocation>
        <location evidence="1">Mitochondrion</location>
    </subcellularLocation>
</comment>
<comment type="similarity">
    <text evidence="3">Belongs to the TRAFAC class YlqF/YawG GTPase family. GEP3 subfamily.</text>
</comment>
<organism>
    <name type="scientific">Debaryomyces hansenii (strain ATCC 36239 / CBS 767 / BCRC 21394 / JCM 1990 / NBRC 0083 / IGC 2968)</name>
    <name type="common">Yeast</name>
    <name type="synonym">Torulaspora hansenii</name>
    <dbReference type="NCBI Taxonomy" id="284592"/>
    <lineage>
        <taxon>Eukaryota</taxon>
        <taxon>Fungi</taxon>
        <taxon>Dikarya</taxon>
        <taxon>Ascomycota</taxon>
        <taxon>Saccharomycotina</taxon>
        <taxon>Pichiomycetes</taxon>
        <taxon>Debaryomycetaceae</taxon>
        <taxon>Debaryomyces</taxon>
    </lineage>
</organism>
<evidence type="ECO:0000250" key="1"/>
<evidence type="ECO:0000255" key="2"/>
<evidence type="ECO:0000255" key="3">
    <source>
        <dbReference type="PROSITE-ProRule" id="PRU01058"/>
    </source>
</evidence>